<accession>Q9FKT8</accession>
<name>COX15_ARATH</name>
<dbReference type="EC" id="1.17.99.9" evidence="2"/>
<dbReference type="EMBL" id="AB011476">
    <property type="protein sequence ID" value="BAB09291.1"/>
    <property type="molecule type" value="Genomic_DNA"/>
</dbReference>
<dbReference type="EMBL" id="CP002688">
    <property type="protein sequence ID" value="AED96720.1"/>
    <property type="molecule type" value="Genomic_DNA"/>
</dbReference>
<dbReference type="EMBL" id="AK117496">
    <property type="protein sequence ID" value="BAC42159.1"/>
    <property type="molecule type" value="mRNA"/>
</dbReference>
<dbReference type="EMBL" id="BT004976">
    <property type="protein sequence ID" value="AAO50509.1"/>
    <property type="molecule type" value="mRNA"/>
</dbReference>
<dbReference type="RefSeq" id="NP_200420.1">
    <property type="nucleotide sequence ID" value="NM_124991.4"/>
</dbReference>
<dbReference type="SMR" id="Q9FKT8"/>
<dbReference type="FunCoup" id="Q9FKT8">
    <property type="interactions" value="3657"/>
</dbReference>
<dbReference type="STRING" id="3702.Q9FKT8"/>
<dbReference type="PaxDb" id="3702-AT5G56090.1"/>
<dbReference type="ProteomicsDB" id="241112"/>
<dbReference type="EnsemblPlants" id="AT5G56090.1">
    <property type="protein sequence ID" value="AT5G56090.1"/>
    <property type="gene ID" value="AT5G56090"/>
</dbReference>
<dbReference type="GeneID" id="835708"/>
<dbReference type="Gramene" id="AT5G56090.1">
    <property type="protein sequence ID" value="AT5G56090.1"/>
    <property type="gene ID" value="AT5G56090"/>
</dbReference>
<dbReference type="KEGG" id="ath:AT5G56090"/>
<dbReference type="Araport" id="AT5G56090"/>
<dbReference type="TAIR" id="AT5G56090">
    <property type="gene designation" value="COX15"/>
</dbReference>
<dbReference type="eggNOG" id="KOG2725">
    <property type="taxonomic scope" value="Eukaryota"/>
</dbReference>
<dbReference type="HOGENOM" id="CLU_017627_0_0_1"/>
<dbReference type="InParanoid" id="Q9FKT8"/>
<dbReference type="OMA" id="AFVCYSW"/>
<dbReference type="OrthoDB" id="1726137at2759"/>
<dbReference type="PhylomeDB" id="Q9FKT8"/>
<dbReference type="UniPathway" id="UPA00269">
    <property type="reaction ID" value="UER00713"/>
</dbReference>
<dbReference type="PRO" id="PR:Q9FKT8"/>
<dbReference type="Proteomes" id="UP000006548">
    <property type="component" value="Chromosome 5"/>
</dbReference>
<dbReference type="ExpressionAtlas" id="Q9FKT8">
    <property type="expression patterns" value="baseline and differential"/>
</dbReference>
<dbReference type="GO" id="GO:0005743">
    <property type="term" value="C:mitochondrial inner membrane"/>
    <property type="evidence" value="ECO:0007669"/>
    <property type="project" value="UniProtKB-SubCell"/>
</dbReference>
<dbReference type="GO" id="GO:0005739">
    <property type="term" value="C:mitochondrion"/>
    <property type="evidence" value="ECO:0007005"/>
    <property type="project" value="TAIR"/>
</dbReference>
<dbReference type="GO" id="GO:0046872">
    <property type="term" value="F:metal ion binding"/>
    <property type="evidence" value="ECO:0007669"/>
    <property type="project" value="UniProtKB-KW"/>
</dbReference>
<dbReference type="GO" id="GO:0016653">
    <property type="term" value="F:oxidoreductase activity, acting on NAD(P)H, heme protein as acceptor"/>
    <property type="evidence" value="ECO:0007669"/>
    <property type="project" value="InterPro"/>
</dbReference>
<dbReference type="GO" id="GO:0006784">
    <property type="term" value="P:heme A biosynthetic process"/>
    <property type="evidence" value="ECO:0007669"/>
    <property type="project" value="UniProtKB-UniPathway"/>
</dbReference>
<dbReference type="HAMAP" id="MF_01665">
    <property type="entry name" value="HemeA_synth_type2"/>
    <property type="match status" value="1"/>
</dbReference>
<dbReference type="InterPro" id="IPR003780">
    <property type="entry name" value="COX15/CtaA_fam"/>
</dbReference>
<dbReference type="InterPro" id="IPR023754">
    <property type="entry name" value="HemeA_Synthase_type2"/>
</dbReference>
<dbReference type="PANTHER" id="PTHR23289">
    <property type="entry name" value="CYTOCHROME C OXIDASE ASSEMBLY PROTEIN COX15"/>
    <property type="match status" value="1"/>
</dbReference>
<dbReference type="PANTHER" id="PTHR23289:SF2">
    <property type="entry name" value="CYTOCHROME C OXIDASE ASSEMBLY PROTEIN COX15 HOMOLOG"/>
    <property type="match status" value="1"/>
</dbReference>
<dbReference type="Pfam" id="PF02628">
    <property type="entry name" value="COX15-CtaA"/>
    <property type="match status" value="1"/>
</dbReference>
<protein>
    <recommendedName>
        <fullName>Heme A synthase COX15</fullName>
        <shortName>HAS</shortName>
        <ecNumber evidence="2">1.17.99.9</ecNumber>
    </recommendedName>
    <alternativeName>
        <fullName>Cytochrome c oxidase assembly protein COX15</fullName>
    </alternativeName>
</protein>
<comment type="function">
    <text evidence="2">Catalyzes the second reaction in the biosynthesis of heme A, a prosthetic group of mitochondrial cytochrome c oxidase (CcO). Heme A is synthesized from heme B by two sequential enzymatic reactions catalyzed by heme O synthase (HOS) and heme A synthase (HAS). HAS catalyzes the conversion of heme O to heme A by two successive hydroxylations of the methyl group at C8, in a reaction that involves matrix ferredoxin and ferredoxin reductase. The first hydroxylation forms heme I, the second hydroxylation results in an unstable dihydroxymethyl group, which spontaneously dehydrates, resulting in the formyl group of heme A.</text>
</comment>
<comment type="catalytic activity">
    <reaction evidence="1">
        <text>Fe(II)-heme o + 2 A + H2O = Fe(II)-heme a + 2 AH2</text>
        <dbReference type="Rhea" id="RHEA:63388"/>
        <dbReference type="ChEBI" id="CHEBI:13193"/>
        <dbReference type="ChEBI" id="CHEBI:15377"/>
        <dbReference type="ChEBI" id="CHEBI:17499"/>
        <dbReference type="ChEBI" id="CHEBI:60530"/>
        <dbReference type="ChEBI" id="CHEBI:61715"/>
        <dbReference type="EC" id="1.17.99.9"/>
    </reaction>
    <physiologicalReaction direction="left-to-right" evidence="1">
        <dbReference type="Rhea" id="RHEA:63389"/>
    </physiologicalReaction>
</comment>
<comment type="cofactor">
    <cofactor evidence="1">
        <name>heme b</name>
        <dbReference type="ChEBI" id="CHEBI:60344"/>
    </cofactor>
</comment>
<comment type="pathway">
    <text evidence="2">Porphyrin-containing compound metabolism; heme A biosynthesis; heme A from heme O: step 1/1.</text>
</comment>
<comment type="subcellular location">
    <subcellularLocation>
        <location evidence="2">Mitochondrion inner membrane</location>
        <topology evidence="3">Multi-pass membrane protein</topology>
    </subcellularLocation>
</comment>
<comment type="domain">
    <text evidence="1">The N-half (TM1-TM4) and C-half (TM5-TM8) domains are connected by an intracellular loop. Each domain is formed from four-helix bundles and they align in a pseudo twofold symmetry manner. The N-half domain is the substrate heme O binding domain and the C-half domain is the cofactor heme B binding domain.</text>
</comment>
<comment type="similarity">
    <text evidence="4">Belongs to the COX15/CtaA family. Type 2 subfamily.</text>
</comment>
<proteinExistence type="evidence at transcript level"/>
<feature type="chain" id="PRO_0000412566" description="Heme A synthase COX15">
    <location>
        <begin position="1"/>
        <end position="457"/>
    </location>
</feature>
<feature type="topological domain" description="Mitochondrial matrix" evidence="2">
    <location>
        <begin position="1"/>
        <end position="98"/>
    </location>
</feature>
<feature type="transmembrane region" description="Helical" evidence="3">
    <location>
        <begin position="99"/>
        <end position="119"/>
    </location>
</feature>
<feature type="topological domain" description="Mitochondrial intermembrane" evidence="2">
    <location>
        <begin position="120"/>
        <end position="186"/>
    </location>
</feature>
<feature type="transmembrane region" description="Helical" evidence="3">
    <location>
        <begin position="187"/>
        <end position="207"/>
    </location>
</feature>
<feature type="topological domain" description="Mitochondrial matrix" evidence="2">
    <location>
        <begin position="208"/>
        <end position="210"/>
    </location>
</feature>
<feature type="transmembrane region" description="Helical" evidence="3">
    <location>
        <begin position="211"/>
        <end position="231"/>
    </location>
</feature>
<feature type="topological domain" description="Mitochondrial intermembrane" evidence="2">
    <location>
        <begin position="232"/>
        <end position="255"/>
    </location>
</feature>
<feature type="transmembrane region" description="Helical" evidence="3">
    <location>
        <begin position="256"/>
        <end position="276"/>
    </location>
</feature>
<feature type="topological domain" description="Mitochondrial matrix" evidence="2">
    <location>
        <begin position="277"/>
        <end position="294"/>
    </location>
</feature>
<feature type="transmembrane region" description="Helical" evidence="3">
    <location>
        <begin position="295"/>
        <end position="315"/>
    </location>
</feature>
<feature type="topological domain" description="Mitochondrial intermembrane" evidence="2">
    <location>
        <begin position="316"/>
        <end position="357"/>
    </location>
</feature>
<feature type="transmembrane region" description="Helical" evidence="3">
    <location>
        <begin position="358"/>
        <end position="375"/>
    </location>
</feature>
<feature type="topological domain" description="Mitochondrial matrix" evidence="2">
    <location>
        <begin position="376"/>
        <end position="387"/>
    </location>
</feature>
<feature type="transmembrane region" description="Helical" evidence="3">
    <location>
        <begin position="388"/>
        <end position="408"/>
    </location>
</feature>
<feature type="topological domain" description="Mitochondrial intermembrane" evidence="2">
    <location>
        <begin position="409"/>
        <end position="412"/>
    </location>
</feature>
<feature type="transmembrane region" description="Helical" evidence="3">
    <location>
        <begin position="413"/>
        <end position="433"/>
    </location>
</feature>
<feature type="topological domain" description="Mitochondrial matrix" evidence="2">
    <location>
        <begin position="434"/>
        <end position="457"/>
    </location>
</feature>
<feature type="binding site" description="axial binding residue" evidence="1">
    <location>
        <position position="181"/>
    </location>
    <ligand>
        <name>heme o</name>
        <dbReference type="ChEBI" id="CHEBI:24480"/>
    </ligand>
    <ligandPart>
        <name>Fe</name>
        <dbReference type="ChEBI" id="CHEBI:18248"/>
    </ligandPart>
</feature>
<feature type="binding site" description="axial binding residue" evidence="1">
    <location>
        <position position="255"/>
    </location>
    <ligand>
        <name>heme o</name>
        <dbReference type="ChEBI" id="CHEBI:24480"/>
    </ligand>
    <ligandPart>
        <name>Fe</name>
        <dbReference type="ChEBI" id="CHEBI:18248"/>
    </ligandPart>
</feature>
<feature type="binding site" description="axial binding residue" evidence="1">
    <location>
        <position position="358"/>
    </location>
    <ligand>
        <name>heme b</name>
        <dbReference type="ChEBI" id="CHEBI:60344"/>
    </ligand>
    <ligandPart>
        <name>Fe</name>
        <dbReference type="ChEBI" id="CHEBI:18248"/>
    </ligandPart>
</feature>
<feature type="binding site" description="axial binding residue" evidence="1">
    <location>
        <position position="419"/>
    </location>
    <ligand>
        <name>heme b</name>
        <dbReference type="ChEBI" id="CHEBI:60344"/>
    </ligand>
    <ligandPart>
        <name>Fe</name>
        <dbReference type="ChEBI" id="CHEBI:18248"/>
    </ligandPart>
</feature>
<reference key="1">
    <citation type="journal article" date="1998" name="DNA Res.">
        <title>Structural analysis of Arabidopsis thaliana chromosome 5. V. Sequence features of the regions of 1,381,565 bp covered by twenty one physically assigned P1 and TAC clones.</title>
        <authorList>
            <person name="Kaneko T."/>
            <person name="Kotani H."/>
            <person name="Nakamura Y."/>
            <person name="Sato S."/>
            <person name="Asamizu E."/>
            <person name="Miyajima N."/>
            <person name="Tabata S."/>
        </authorList>
    </citation>
    <scope>NUCLEOTIDE SEQUENCE [LARGE SCALE GENOMIC DNA]</scope>
    <source>
        <strain>cv. Columbia</strain>
    </source>
</reference>
<reference key="2">
    <citation type="journal article" date="2017" name="Plant J.">
        <title>Araport11: a complete reannotation of the Arabidopsis thaliana reference genome.</title>
        <authorList>
            <person name="Cheng C.Y."/>
            <person name="Krishnakumar V."/>
            <person name="Chan A.P."/>
            <person name="Thibaud-Nissen F."/>
            <person name="Schobel S."/>
            <person name="Town C.D."/>
        </authorList>
    </citation>
    <scope>GENOME REANNOTATION</scope>
    <source>
        <strain>cv. Columbia</strain>
    </source>
</reference>
<reference key="3">
    <citation type="journal article" date="2002" name="Science">
        <title>Functional annotation of a full-length Arabidopsis cDNA collection.</title>
        <authorList>
            <person name="Seki M."/>
            <person name="Narusaka M."/>
            <person name="Kamiya A."/>
            <person name="Ishida J."/>
            <person name="Satou M."/>
            <person name="Sakurai T."/>
            <person name="Nakajima M."/>
            <person name="Enju A."/>
            <person name="Akiyama K."/>
            <person name="Oono Y."/>
            <person name="Muramatsu M."/>
            <person name="Hayashizaki Y."/>
            <person name="Kawai J."/>
            <person name="Carninci P."/>
            <person name="Itoh M."/>
            <person name="Ishii Y."/>
            <person name="Arakawa T."/>
            <person name="Shibata K."/>
            <person name="Shinagawa A."/>
            <person name="Shinozaki K."/>
        </authorList>
    </citation>
    <scope>NUCLEOTIDE SEQUENCE [LARGE SCALE MRNA]</scope>
    <source>
        <strain>cv. Columbia</strain>
    </source>
</reference>
<reference key="4">
    <citation type="journal article" date="2003" name="Science">
        <title>Empirical analysis of transcriptional activity in the Arabidopsis genome.</title>
        <authorList>
            <person name="Yamada K."/>
            <person name="Lim J."/>
            <person name="Dale J.M."/>
            <person name="Chen H."/>
            <person name="Shinn P."/>
            <person name="Palm C.J."/>
            <person name="Southwick A.M."/>
            <person name="Wu H.C."/>
            <person name="Kim C.J."/>
            <person name="Nguyen M."/>
            <person name="Pham P.K."/>
            <person name="Cheuk R.F."/>
            <person name="Karlin-Newmann G."/>
            <person name="Liu S.X."/>
            <person name="Lam B."/>
            <person name="Sakano H."/>
            <person name="Wu T."/>
            <person name="Yu G."/>
            <person name="Miranda M."/>
            <person name="Quach H.L."/>
            <person name="Tripp M."/>
            <person name="Chang C.H."/>
            <person name="Lee J.M."/>
            <person name="Toriumi M.J."/>
            <person name="Chan M.M."/>
            <person name="Tang C.C."/>
            <person name="Onodera C.S."/>
            <person name="Deng J.M."/>
            <person name="Akiyama K."/>
            <person name="Ansari Y."/>
            <person name="Arakawa T."/>
            <person name="Banh J."/>
            <person name="Banno F."/>
            <person name="Bowser L."/>
            <person name="Brooks S.Y."/>
            <person name="Carninci P."/>
            <person name="Chao Q."/>
            <person name="Choy N."/>
            <person name="Enju A."/>
            <person name="Goldsmith A.D."/>
            <person name="Gurjal M."/>
            <person name="Hansen N.F."/>
            <person name="Hayashizaki Y."/>
            <person name="Johnson-Hopson C."/>
            <person name="Hsuan V.W."/>
            <person name="Iida K."/>
            <person name="Karnes M."/>
            <person name="Khan S."/>
            <person name="Koesema E."/>
            <person name="Ishida J."/>
            <person name="Jiang P.X."/>
            <person name="Jones T."/>
            <person name="Kawai J."/>
            <person name="Kamiya A."/>
            <person name="Meyers C."/>
            <person name="Nakajima M."/>
            <person name="Narusaka M."/>
            <person name="Seki M."/>
            <person name="Sakurai T."/>
            <person name="Satou M."/>
            <person name="Tamse R."/>
            <person name="Vaysberg M."/>
            <person name="Wallender E.K."/>
            <person name="Wong C."/>
            <person name="Yamamura Y."/>
            <person name="Yuan S."/>
            <person name="Shinozaki K."/>
            <person name="Davis R.W."/>
            <person name="Theologis A."/>
            <person name="Ecker J.R."/>
        </authorList>
    </citation>
    <scope>NUCLEOTIDE SEQUENCE [LARGE SCALE MRNA]</scope>
    <source>
        <strain>cv. Columbia</strain>
    </source>
</reference>
<evidence type="ECO:0000250" key="1">
    <source>
        <dbReference type="UniProtKB" id="P12946"/>
    </source>
</evidence>
<evidence type="ECO:0000250" key="2">
    <source>
        <dbReference type="UniProtKB" id="P40086"/>
    </source>
</evidence>
<evidence type="ECO:0000255" key="3"/>
<evidence type="ECO:0000305" key="4"/>
<organism>
    <name type="scientific">Arabidopsis thaliana</name>
    <name type="common">Mouse-ear cress</name>
    <dbReference type="NCBI Taxonomy" id="3702"/>
    <lineage>
        <taxon>Eukaryota</taxon>
        <taxon>Viridiplantae</taxon>
        <taxon>Streptophyta</taxon>
        <taxon>Embryophyta</taxon>
        <taxon>Tracheophyta</taxon>
        <taxon>Spermatophyta</taxon>
        <taxon>Magnoliopsida</taxon>
        <taxon>eudicotyledons</taxon>
        <taxon>Gunneridae</taxon>
        <taxon>Pentapetalae</taxon>
        <taxon>rosids</taxon>
        <taxon>malvids</taxon>
        <taxon>Brassicales</taxon>
        <taxon>Brassicaceae</taxon>
        <taxon>Camelineae</taxon>
        <taxon>Arabidopsis</taxon>
    </lineage>
</organism>
<sequence>MFRAVGSALKRNKEAFNGIARGFTTSSHRVFTSNITAASVTSASSSPLAGNSFYGLRSLLKGQNASMFRRMSTVASISSESKEGLKLLVTGGPQAQKWVGIWLFGSAAWVFSMVVLGGVTRLTRSGLSMTDWKFTGEFPPLSDEAWAKEFEKYKQSPEYKRVNKGMNLEDFKFIYWMEYAHRMWGRGLGIMFALPFSYFLRKGYITLRLGVQLSGLFALGAGQGFIGWWMVKSGLEEPPSEYSQPRVSPYRLAAHLTSAFAIYCGLFWTALSVVMPEPPAESLAWVRGAAKVKKLALPVSLIVGITAISGAFVAGNDAGRAFNTFPKMGDTWIPDNIFEMKPLLRNFFENTATVQLDHRLLATTTLIAIGTMWWFTRKLDIHPAVKALIGSTVGMTAVQVTLGVSTLLSYVPVSLGSAHQAGALTLLTLMLLLNHTLRRPSPSLLKSLPQVAKSNFS</sequence>
<keyword id="KW-0350">Heme biosynthesis</keyword>
<keyword id="KW-0408">Iron</keyword>
<keyword id="KW-0472">Membrane</keyword>
<keyword id="KW-0479">Metal-binding</keyword>
<keyword id="KW-0496">Mitochondrion</keyword>
<keyword id="KW-0999">Mitochondrion inner membrane</keyword>
<keyword id="KW-0560">Oxidoreductase</keyword>
<keyword id="KW-1185">Reference proteome</keyword>
<keyword id="KW-0812">Transmembrane</keyword>
<keyword id="KW-1133">Transmembrane helix</keyword>
<gene>
    <name type="primary">COX15</name>
    <name type="ordered locus">At5g56090</name>
    <name type="ORF">MDA7_15</name>
</gene>